<feature type="initiator methionine" description="Removed" evidence="2">
    <location>
        <position position="1"/>
    </location>
</feature>
<feature type="chain" id="PRO_0000265107" description="tRNA pseudouridine(38/39) synthase">
    <location>
        <begin position="2"/>
        <end position="481"/>
    </location>
</feature>
<feature type="region of interest" description="Disordered" evidence="3">
    <location>
        <begin position="29"/>
        <end position="54"/>
    </location>
</feature>
<feature type="compositionally biased region" description="Basic and acidic residues" evidence="3">
    <location>
        <begin position="29"/>
        <end position="40"/>
    </location>
</feature>
<feature type="active site" description="Nucleophile" evidence="1">
    <location>
        <position position="118"/>
    </location>
</feature>
<feature type="binding site" evidence="1">
    <location>
        <position position="195"/>
    </location>
    <ligand>
        <name>substrate</name>
    </ligand>
</feature>
<feature type="modified residue" description="N-acetylalanine" evidence="2">
    <location>
        <position position="2"/>
    </location>
</feature>
<feature type="modified residue" description="Phosphothreonine" evidence="2">
    <location>
        <position position="456"/>
    </location>
</feature>
<gene>
    <name type="primary">PUS3</name>
</gene>
<comment type="function">
    <text evidence="2">Formation of pseudouridine at position 39 in the anticodon stem and loop of transfer RNAs.</text>
</comment>
<comment type="catalytic activity">
    <reaction evidence="2">
        <text>uridine(38/39) in tRNA = pseudouridine(38/39) in tRNA</text>
        <dbReference type="Rhea" id="RHEA:42564"/>
        <dbReference type="Rhea" id="RHEA-COMP:10117"/>
        <dbReference type="Rhea" id="RHEA-COMP:10118"/>
        <dbReference type="ChEBI" id="CHEBI:65314"/>
        <dbReference type="ChEBI" id="CHEBI:65315"/>
        <dbReference type="EC" id="5.4.99.45"/>
    </reaction>
</comment>
<comment type="subcellular location">
    <subcellularLocation>
        <location evidence="2">Nucleus</location>
    </subcellularLocation>
</comment>
<comment type="similarity">
    <text evidence="4">Belongs to the tRNA pseudouridine synthase TruA family.</text>
</comment>
<protein>
    <recommendedName>
        <fullName>tRNA pseudouridine(38/39) synthase</fullName>
        <ecNumber evidence="2">5.4.99.45</ecNumber>
    </recommendedName>
    <alternativeName>
        <fullName>tRNA pseudouridine synthase 3</fullName>
    </alternativeName>
    <alternativeName>
        <fullName>tRNA pseudouridylate synthase 3</fullName>
    </alternativeName>
    <alternativeName>
        <fullName>tRNA-uridine isomerase 3</fullName>
    </alternativeName>
</protein>
<accession>Q3SX07</accession>
<keyword id="KW-0007">Acetylation</keyword>
<keyword id="KW-0413">Isomerase</keyword>
<keyword id="KW-0539">Nucleus</keyword>
<keyword id="KW-0597">Phosphoprotein</keyword>
<keyword id="KW-1185">Reference proteome</keyword>
<keyword id="KW-0819">tRNA processing</keyword>
<name>PUS3_BOVIN</name>
<evidence type="ECO:0000250" key="1"/>
<evidence type="ECO:0000250" key="2">
    <source>
        <dbReference type="UniProtKB" id="Q9BZE2"/>
    </source>
</evidence>
<evidence type="ECO:0000256" key="3">
    <source>
        <dbReference type="SAM" id="MobiDB-lite"/>
    </source>
</evidence>
<evidence type="ECO:0000305" key="4"/>
<organism>
    <name type="scientific">Bos taurus</name>
    <name type="common">Bovine</name>
    <dbReference type="NCBI Taxonomy" id="9913"/>
    <lineage>
        <taxon>Eukaryota</taxon>
        <taxon>Metazoa</taxon>
        <taxon>Chordata</taxon>
        <taxon>Craniata</taxon>
        <taxon>Vertebrata</taxon>
        <taxon>Euteleostomi</taxon>
        <taxon>Mammalia</taxon>
        <taxon>Eutheria</taxon>
        <taxon>Laurasiatheria</taxon>
        <taxon>Artiodactyla</taxon>
        <taxon>Ruminantia</taxon>
        <taxon>Pecora</taxon>
        <taxon>Bovidae</taxon>
        <taxon>Bovinae</taxon>
        <taxon>Bos</taxon>
    </lineage>
</organism>
<proteinExistence type="evidence at transcript level"/>
<sequence>MAENDVDRIQTEKLLKRVQELEQEVKRLKKEQANNKDSNIRENSSGAGGKPKRAFDFSAHGQRHVALKIAYLGWGYQGFASQENTSNTIEEKLFEALTKTRLVENRQTSNYHRCGRTDKGVSAFGQVISLDLRSHIPKGRDSEHFNLKNEVNDVATEIRYTHILNRVLPPDIRVLAWAPVETSFSARFSCLERTYRYFFPRANLDIVTMNYAAQKYVGTHDFRNLCKMDVANGVINFQRTILSAQVQRVGQNLGEEGWQEPFQLCQFEVTGQAFLYHQVRCMMAVLFLIGQGMEKPEVIDELLNIEKNPQKPQYSMAVEFPLVLYDCKFENIKWIYDREVQEFNVTHLQQLWANHAVKTQMLYSMLQGLDSVALPCGTGPKMDGMIEWRNVKPSVTKQTSAFVEGVKMRTYKPLMDRPKCQGLESRIQHFVRRGRIEHPHLFHEEETKAKRDCSDTLEEENTVFEKPMKRICVDTELKSII</sequence>
<reference key="1">
    <citation type="submission" date="2005-09" db="EMBL/GenBank/DDBJ databases">
        <authorList>
            <consortium name="NIH - Mammalian Gene Collection (MGC) project"/>
        </authorList>
    </citation>
    <scope>NUCLEOTIDE SEQUENCE [LARGE SCALE MRNA]</scope>
    <source>
        <strain>Hereford</strain>
        <tissue>Uterus</tissue>
    </source>
</reference>
<dbReference type="EC" id="5.4.99.45" evidence="2"/>
<dbReference type="EMBL" id="BC104569">
    <property type="protein sequence ID" value="AAI04570.1"/>
    <property type="molecule type" value="mRNA"/>
</dbReference>
<dbReference type="RefSeq" id="NP_001029684.1">
    <property type="nucleotide sequence ID" value="NM_001034512.2"/>
</dbReference>
<dbReference type="SMR" id="Q3SX07"/>
<dbReference type="FunCoup" id="Q3SX07">
    <property type="interactions" value="2986"/>
</dbReference>
<dbReference type="STRING" id="9913.ENSBTAP00000019065"/>
<dbReference type="PaxDb" id="9913-ENSBTAP00000019065"/>
<dbReference type="GeneID" id="515824"/>
<dbReference type="KEGG" id="bta:515824"/>
<dbReference type="CTD" id="83480"/>
<dbReference type="eggNOG" id="KOG2554">
    <property type="taxonomic scope" value="Eukaryota"/>
</dbReference>
<dbReference type="InParanoid" id="Q3SX07"/>
<dbReference type="OrthoDB" id="25767at2759"/>
<dbReference type="Proteomes" id="UP000009136">
    <property type="component" value="Unplaced"/>
</dbReference>
<dbReference type="GO" id="GO:0005737">
    <property type="term" value="C:cytoplasm"/>
    <property type="evidence" value="ECO:0000318"/>
    <property type="project" value="GO_Central"/>
</dbReference>
<dbReference type="GO" id="GO:0005634">
    <property type="term" value="C:nucleus"/>
    <property type="evidence" value="ECO:0000318"/>
    <property type="project" value="GO_Central"/>
</dbReference>
<dbReference type="GO" id="GO:0009982">
    <property type="term" value="F:pseudouridine synthase activity"/>
    <property type="evidence" value="ECO:0000318"/>
    <property type="project" value="GO_Central"/>
</dbReference>
<dbReference type="GO" id="GO:0003723">
    <property type="term" value="F:RNA binding"/>
    <property type="evidence" value="ECO:0007669"/>
    <property type="project" value="InterPro"/>
</dbReference>
<dbReference type="GO" id="GO:0160154">
    <property type="term" value="F:tRNA pseudouridine(38/39) synthase activity"/>
    <property type="evidence" value="ECO:0000250"/>
    <property type="project" value="UniProtKB"/>
</dbReference>
<dbReference type="GO" id="GO:1990481">
    <property type="term" value="P:mRNA pseudouridine synthesis"/>
    <property type="evidence" value="ECO:0000318"/>
    <property type="project" value="GO_Central"/>
</dbReference>
<dbReference type="GO" id="GO:0031119">
    <property type="term" value="P:tRNA pseudouridine synthesis"/>
    <property type="evidence" value="ECO:0000250"/>
    <property type="project" value="UniProtKB"/>
</dbReference>
<dbReference type="CDD" id="cd02569">
    <property type="entry name" value="PseudoU_synth_ScPus3"/>
    <property type="match status" value="1"/>
</dbReference>
<dbReference type="FunFam" id="3.30.70.580:FF:000007">
    <property type="entry name" value="tRNA pseudouridine synthase"/>
    <property type="match status" value="1"/>
</dbReference>
<dbReference type="FunFam" id="3.30.70.660:FF:000005">
    <property type="entry name" value="tRNA pseudouridine synthase"/>
    <property type="match status" value="1"/>
</dbReference>
<dbReference type="Gene3D" id="3.30.70.660">
    <property type="entry name" value="Pseudouridine synthase I, catalytic domain, C-terminal subdomain"/>
    <property type="match status" value="1"/>
</dbReference>
<dbReference type="Gene3D" id="3.30.70.580">
    <property type="entry name" value="Pseudouridine synthase I, catalytic domain, N-terminal subdomain"/>
    <property type="match status" value="1"/>
</dbReference>
<dbReference type="HAMAP" id="MF_00171">
    <property type="entry name" value="TruA"/>
    <property type="match status" value="1"/>
</dbReference>
<dbReference type="InterPro" id="IPR020103">
    <property type="entry name" value="PsdUridine_synth_cat_dom_sf"/>
</dbReference>
<dbReference type="InterPro" id="IPR001406">
    <property type="entry name" value="PsdUridine_synth_TruA"/>
</dbReference>
<dbReference type="InterPro" id="IPR020097">
    <property type="entry name" value="PsdUridine_synth_TruA_a/b_dom"/>
</dbReference>
<dbReference type="InterPro" id="IPR020095">
    <property type="entry name" value="PsdUridine_synth_TruA_C"/>
</dbReference>
<dbReference type="InterPro" id="IPR041707">
    <property type="entry name" value="Pus3-like"/>
</dbReference>
<dbReference type="InterPro" id="IPR020094">
    <property type="entry name" value="TruA/RsuA/RluB/E/F_N"/>
</dbReference>
<dbReference type="NCBIfam" id="TIGR00071">
    <property type="entry name" value="hisT_truA"/>
    <property type="match status" value="1"/>
</dbReference>
<dbReference type="PANTHER" id="PTHR11142">
    <property type="entry name" value="PSEUDOURIDYLATE SYNTHASE"/>
    <property type="match status" value="1"/>
</dbReference>
<dbReference type="PANTHER" id="PTHR11142:SF5">
    <property type="entry name" value="TRNA PSEUDOURIDINE(38_39) SYNTHASE"/>
    <property type="match status" value="1"/>
</dbReference>
<dbReference type="Pfam" id="PF01416">
    <property type="entry name" value="PseudoU_synth_1"/>
    <property type="match status" value="1"/>
</dbReference>
<dbReference type="SUPFAM" id="SSF55120">
    <property type="entry name" value="Pseudouridine synthase"/>
    <property type="match status" value="1"/>
</dbReference>